<proteinExistence type="inferred from homology"/>
<protein>
    <recommendedName>
        <fullName evidence="1">Large ribosomal subunit protein uL4</fullName>
    </recommendedName>
    <alternativeName>
        <fullName evidence="3">50S ribosomal protein L4</fullName>
    </alternativeName>
</protein>
<accession>Q1CCU5</accession>
<accession>D1Q2M0</accession>
<reference key="1">
    <citation type="journal article" date="2006" name="J. Bacteriol.">
        <title>Complete genome sequence of Yersinia pestis strains Antiqua and Nepal516: evidence of gene reduction in an emerging pathogen.</title>
        <authorList>
            <person name="Chain P.S.G."/>
            <person name="Hu P."/>
            <person name="Malfatti S.A."/>
            <person name="Radnedge L."/>
            <person name="Larimer F."/>
            <person name="Vergez L.M."/>
            <person name="Worsham P."/>
            <person name="Chu M.C."/>
            <person name="Andersen G.L."/>
        </authorList>
    </citation>
    <scope>NUCLEOTIDE SEQUENCE [LARGE SCALE GENOMIC DNA]</scope>
    <source>
        <strain>Nepal516</strain>
    </source>
</reference>
<reference key="2">
    <citation type="submission" date="2009-04" db="EMBL/GenBank/DDBJ databases">
        <title>Yersinia pestis Nepal516A whole genome shotgun sequencing project.</title>
        <authorList>
            <person name="Plunkett G. III"/>
            <person name="Anderson B.D."/>
            <person name="Baumler D.J."/>
            <person name="Burland V."/>
            <person name="Cabot E.L."/>
            <person name="Glasner J.D."/>
            <person name="Mau B."/>
            <person name="Neeno-Eckwall E."/>
            <person name="Perna N.T."/>
            <person name="Munk A.C."/>
            <person name="Tapia R."/>
            <person name="Green L.D."/>
            <person name="Rogers Y.C."/>
            <person name="Detter J.C."/>
            <person name="Bruce D.C."/>
            <person name="Brettin T.S."/>
        </authorList>
    </citation>
    <scope>NUCLEOTIDE SEQUENCE [LARGE SCALE GENOMIC DNA]</scope>
    <source>
        <strain>Nepal516</strain>
    </source>
</reference>
<sequence length="201" mass="22010">MELVMKDAPGALTVSETTFGRDFNEALVHQVVVAYAAGARQGTRAQKTRAEVTGSGKKPWRQKGTGRARAGSVKSPIWRSGGVTFAAKPQDHSQKVNKKMYRGALKSILSELVRQDRLIIVEKFSVEAPKTKLLAQKLKDMALEDVLIVTGELDENLFLAARNLYKVDVRDVAGIDPVSLIAFDKVVMTADAVKQVEEMLA</sequence>
<name>RL4_YERPN</name>
<organism>
    <name type="scientific">Yersinia pestis bv. Antiqua (strain Nepal516)</name>
    <dbReference type="NCBI Taxonomy" id="377628"/>
    <lineage>
        <taxon>Bacteria</taxon>
        <taxon>Pseudomonadati</taxon>
        <taxon>Pseudomonadota</taxon>
        <taxon>Gammaproteobacteria</taxon>
        <taxon>Enterobacterales</taxon>
        <taxon>Yersiniaceae</taxon>
        <taxon>Yersinia</taxon>
    </lineage>
</organism>
<keyword id="KW-0687">Ribonucleoprotein</keyword>
<keyword id="KW-0689">Ribosomal protein</keyword>
<keyword id="KW-0694">RNA-binding</keyword>
<keyword id="KW-0699">rRNA-binding</keyword>
<evidence type="ECO:0000255" key="1">
    <source>
        <dbReference type="HAMAP-Rule" id="MF_01328"/>
    </source>
</evidence>
<evidence type="ECO:0000256" key="2">
    <source>
        <dbReference type="SAM" id="MobiDB-lite"/>
    </source>
</evidence>
<evidence type="ECO:0000305" key="3"/>
<gene>
    <name evidence="1" type="primary">rplD</name>
    <name type="ordered locus">YPN_3858</name>
    <name type="ORF">YP516_4381</name>
</gene>
<comment type="function">
    <text evidence="1">One of the primary rRNA binding proteins, this protein initially binds near the 5'-end of the 23S rRNA. It is important during the early stages of 50S assembly. It makes multiple contacts with different domains of the 23S rRNA in the assembled 50S subunit and ribosome.</text>
</comment>
<comment type="function">
    <text evidence="1">Forms part of the polypeptide exit tunnel.</text>
</comment>
<comment type="subunit">
    <text evidence="1">Part of the 50S ribosomal subunit.</text>
</comment>
<comment type="similarity">
    <text evidence="1">Belongs to the universal ribosomal protein uL4 family.</text>
</comment>
<dbReference type="EMBL" id="CP000305">
    <property type="protein sequence ID" value="ABG20185.1"/>
    <property type="molecule type" value="Genomic_DNA"/>
</dbReference>
<dbReference type="EMBL" id="ACNQ01000019">
    <property type="protein sequence ID" value="EEO74773.1"/>
    <property type="molecule type" value="Genomic_DNA"/>
</dbReference>
<dbReference type="RefSeq" id="WP_002218934.1">
    <property type="nucleotide sequence ID" value="NZ_ACNQ01000019.1"/>
</dbReference>
<dbReference type="SMR" id="Q1CCU5"/>
<dbReference type="GeneID" id="96663195"/>
<dbReference type="KEGG" id="ypn:YPN_3858"/>
<dbReference type="HOGENOM" id="CLU_041575_5_2_6"/>
<dbReference type="Proteomes" id="UP000008936">
    <property type="component" value="Chromosome"/>
</dbReference>
<dbReference type="GO" id="GO:1990904">
    <property type="term" value="C:ribonucleoprotein complex"/>
    <property type="evidence" value="ECO:0007669"/>
    <property type="project" value="UniProtKB-KW"/>
</dbReference>
<dbReference type="GO" id="GO:0005840">
    <property type="term" value="C:ribosome"/>
    <property type="evidence" value="ECO:0007669"/>
    <property type="project" value="UniProtKB-KW"/>
</dbReference>
<dbReference type="GO" id="GO:0019843">
    <property type="term" value="F:rRNA binding"/>
    <property type="evidence" value="ECO:0007669"/>
    <property type="project" value="UniProtKB-UniRule"/>
</dbReference>
<dbReference type="GO" id="GO:0003735">
    <property type="term" value="F:structural constituent of ribosome"/>
    <property type="evidence" value="ECO:0007669"/>
    <property type="project" value="InterPro"/>
</dbReference>
<dbReference type="GO" id="GO:0006412">
    <property type="term" value="P:translation"/>
    <property type="evidence" value="ECO:0007669"/>
    <property type="project" value="UniProtKB-UniRule"/>
</dbReference>
<dbReference type="FunFam" id="3.40.1370.10:FF:000001">
    <property type="entry name" value="50S ribosomal protein L4"/>
    <property type="match status" value="1"/>
</dbReference>
<dbReference type="Gene3D" id="3.40.1370.10">
    <property type="match status" value="1"/>
</dbReference>
<dbReference type="HAMAP" id="MF_01328_B">
    <property type="entry name" value="Ribosomal_uL4_B"/>
    <property type="match status" value="1"/>
</dbReference>
<dbReference type="InterPro" id="IPR002136">
    <property type="entry name" value="Ribosomal_uL4"/>
</dbReference>
<dbReference type="InterPro" id="IPR013005">
    <property type="entry name" value="Ribosomal_uL4-like"/>
</dbReference>
<dbReference type="InterPro" id="IPR023574">
    <property type="entry name" value="Ribosomal_uL4_dom_sf"/>
</dbReference>
<dbReference type="NCBIfam" id="TIGR03953">
    <property type="entry name" value="rplD_bact"/>
    <property type="match status" value="1"/>
</dbReference>
<dbReference type="PANTHER" id="PTHR10746">
    <property type="entry name" value="50S RIBOSOMAL PROTEIN L4"/>
    <property type="match status" value="1"/>
</dbReference>
<dbReference type="PANTHER" id="PTHR10746:SF6">
    <property type="entry name" value="LARGE RIBOSOMAL SUBUNIT PROTEIN UL4M"/>
    <property type="match status" value="1"/>
</dbReference>
<dbReference type="Pfam" id="PF00573">
    <property type="entry name" value="Ribosomal_L4"/>
    <property type="match status" value="1"/>
</dbReference>
<dbReference type="SUPFAM" id="SSF52166">
    <property type="entry name" value="Ribosomal protein L4"/>
    <property type="match status" value="1"/>
</dbReference>
<feature type="chain" id="PRO_1000052529" description="Large ribosomal subunit protein uL4">
    <location>
        <begin position="1"/>
        <end position="201"/>
    </location>
</feature>
<feature type="region of interest" description="Disordered" evidence="2">
    <location>
        <begin position="45"/>
        <end position="73"/>
    </location>
</feature>